<comment type="function">
    <text evidence="1">This is one of the proteins that bind and probably mediate the attachment of the 5S RNA into the large ribosomal subunit, where it forms part of the central protuberance. In the 70S ribosome it contacts protein S13 of the 30S subunit (bridge B1b), connecting the 2 subunits; this bridge is implicated in subunit movement. Contacts the P site tRNA; the 5S rRNA and some of its associated proteins might help stabilize positioning of ribosome-bound tRNAs.</text>
</comment>
<comment type="subunit">
    <text evidence="1">Part of the 50S ribosomal subunit; part of the 5S rRNA/L5/L18/L25 subcomplex. Contacts the 5S rRNA and the P site tRNA. Forms a bridge to the 30S subunit in the 70S ribosome.</text>
</comment>
<comment type="similarity">
    <text evidence="1">Belongs to the universal ribosomal protein uL5 family.</text>
</comment>
<proteinExistence type="inferred from homology"/>
<gene>
    <name evidence="1" type="primary">rplE</name>
    <name type="ordered locus">mlr0308</name>
</gene>
<protein>
    <recommendedName>
        <fullName evidence="1">Large ribosomal subunit protein uL5</fullName>
    </recommendedName>
    <alternativeName>
        <fullName evidence="2">50S ribosomal protein L5</fullName>
    </alternativeName>
</protein>
<feature type="chain" id="PRO_0000124974" description="Large ribosomal subunit protein uL5">
    <location>
        <begin position="1"/>
        <end position="192"/>
    </location>
</feature>
<sequence length="192" mass="21639">MAKAQSKQATATNTPRLKQVYNETIRKALQEQFGYDNDMQVPRLDKIVLNMGVGEATADSKKPSVAAEDLALIAGQKAVVTRARNSIAGFKVRENMPIGAKVTLRKERMYEFLDRLVNIALPRVRDFRGLNPKSFDGRGNYAMGIKEHIVFPEINYDKVDQIWGMDVIVCTTAKTDDEARALLKAFNFPFRQ</sequence>
<keyword id="KW-0687">Ribonucleoprotein</keyword>
<keyword id="KW-0689">Ribosomal protein</keyword>
<keyword id="KW-0694">RNA-binding</keyword>
<keyword id="KW-0699">rRNA-binding</keyword>
<keyword id="KW-0820">tRNA-binding</keyword>
<organism>
    <name type="scientific">Mesorhizobium japonicum (strain LMG 29417 / CECT 9101 / MAFF 303099)</name>
    <name type="common">Mesorhizobium loti (strain MAFF 303099)</name>
    <dbReference type="NCBI Taxonomy" id="266835"/>
    <lineage>
        <taxon>Bacteria</taxon>
        <taxon>Pseudomonadati</taxon>
        <taxon>Pseudomonadota</taxon>
        <taxon>Alphaproteobacteria</taxon>
        <taxon>Hyphomicrobiales</taxon>
        <taxon>Phyllobacteriaceae</taxon>
        <taxon>Mesorhizobium</taxon>
    </lineage>
</organism>
<reference key="1">
    <citation type="journal article" date="2000" name="DNA Res.">
        <title>Complete genome structure of the nitrogen-fixing symbiotic bacterium Mesorhizobium loti.</title>
        <authorList>
            <person name="Kaneko T."/>
            <person name="Nakamura Y."/>
            <person name="Sato S."/>
            <person name="Asamizu E."/>
            <person name="Kato T."/>
            <person name="Sasamoto S."/>
            <person name="Watanabe A."/>
            <person name="Idesawa K."/>
            <person name="Ishikawa A."/>
            <person name="Kawashima K."/>
            <person name="Kimura T."/>
            <person name="Kishida Y."/>
            <person name="Kiyokawa C."/>
            <person name="Kohara M."/>
            <person name="Matsumoto M."/>
            <person name="Matsuno A."/>
            <person name="Mochizuki Y."/>
            <person name="Nakayama S."/>
            <person name="Nakazaki N."/>
            <person name="Shimpo S."/>
            <person name="Sugimoto M."/>
            <person name="Takeuchi C."/>
            <person name="Yamada M."/>
            <person name="Tabata S."/>
        </authorList>
    </citation>
    <scope>NUCLEOTIDE SEQUENCE [LARGE SCALE GENOMIC DNA]</scope>
    <source>
        <strain>LMG 29417 / CECT 9101 / MAFF 303099</strain>
    </source>
</reference>
<name>RL5_RHILO</name>
<dbReference type="EMBL" id="BA000012">
    <property type="protein sequence ID" value="BAB47918.1"/>
    <property type="molecule type" value="Genomic_DNA"/>
</dbReference>
<dbReference type="RefSeq" id="WP_010909281.1">
    <property type="nucleotide sequence ID" value="NC_002678.2"/>
</dbReference>
<dbReference type="SMR" id="Q98N45"/>
<dbReference type="GeneID" id="66684204"/>
<dbReference type="KEGG" id="mlo:mlr0308"/>
<dbReference type="eggNOG" id="COG0094">
    <property type="taxonomic scope" value="Bacteria"/>
</dbReference>
<dbReference type="HOGENOM" id="CLU_061015_2_1_5"/>
<dbReference type="Proteomes" id="UP000000552">
    <property type="component" value="Chromosome"/>
</dbReference>
<dbReference type="GO" id="GO:1990904">
    <property type="term" value="C:ribonucleoprotein complex"/>
    <property type="evidence" value="ECO:0007669"/>
    <property type="project" value="UniProtKB-KW"/>
</dbReference>
<dbReference type="GO" id="GO:0005840">
    <property type="term" value="C:ribosome"/>
    <property type="evidence" value="ECO:0007669"/>
    <property type="project" value="UniProtKB-KW"/>
</dbReference>
<dbReference type="GO" id="GO:0019843">
    <property type="term" value="F:rRNA binding"/>
    <property type="evidence" value="ECO:0007669"/>
    <property type="project" value="UniProtKB-UniRule"/>
</dbReference>
<dbReference type="GO" id="GO:0003735">
    <property type="term" value="F:structural constituent of ribosome"/>
    <property type="evidence" value="ECO:0007669"/>
    <property type="project" value="InterPro"/>
</dbReference>
<dbReference type="GO" id="GO:0000049">
    <property type="term" value="F:tRNA binding"/>
    <property type="evidence" value="ECO:0007669"/>
    <property type="project" value="UniProtKB-UniRule"/>
</dbReference>
<dbReference type="GO" id="GO:0006412">
    <property type="term" value="P:translation"/>
    <property type="evidence" value="ECO:0007669"/>
    <property type="project" value="UniProtKB-UniRule"/>
</dbReference>
<dbReference type="FunFam" id="3.30.1440.10:FF:000001">
    <property type="entry name" value="50S ribosomal protein L5"/>
    <property type="match status" value="1"/>
</dbReference>
<dbReference type="Gene3D" id="3.30.1440.10">
    <property type="match status" value="1"/>
</dbReference>
<dbReference type="HAMAP" id="MF_01333_B">
    <property type="entry name" value="Ribosomal_uL5_B"/>
    <property type="match status" value="1"/>
</dbReference>
<dbReference type="InterPro" id="IPR002132">
    <property type="entry name" value="Ribosomal_uL5"/>
</dbReference>
<dbReference type="InterPro" id="IPR020930">
    <property type="entry name" value="Ribosomal_uL5_bac-type"/>
</dbReference>
<dbReference type="InterPro" id="IPR031309">
    <property type="entry name" value="Ribosomal_uL5_C"/>
</dbReference>
<dbReference type="InterPro" id="IPR020929">
    <property type="entry name" value="Ribosomal_uL5_CS"/>
</dbReference>
<dbReference type="InterPro" id="IPR022803">
    <property type="entry name" value="Ribosomal_uL5_dom_sf"/>
</dbReference>
<dbReference type="InterPro" id="IPR031310">
    <property type="entry name" value="Ribosomal_uL5_N"/>
</dbReference>
<dbReference type="NCBIfam" id="NF000585">
    <property type="entry name" value="PRK00010.1"/>
    <property type="match status" value="1"/>
</dbReference>
<dbReference type="PANTHER" id="PTHR11994">
    <property type="entry name" value="60S RIBOSOMAL PROTEIN L11-RELATED"/>
    <property type="match status" value="1"/>
</dbReference>
<dbReference type="Pfam" id="PF00281">
    <property type="entry name" value="Ribosomal_L5"/>
    <property type="match status" value="1"/>
</dbReference>
<dbReference type="Pfam" id="PF00673">
    <property type="entry name" value="Ribosomal_L5_C"/>
    <property type="match status" value="1"/>
</dbReference>
<dbReference type="PIRSF" id="PIRSF002161">
    <property type="entry name" value="Ribosomal_L5"/>
    <property type="match status" value="1"/>
</dbReference>
<dbReference type="SUPFAM" id="SSF55282">
    <property type="entry name" value="RL5-like"/>
    <property type="match status" value="1"/>
</dbReference>
<dbReference type="PROSITE" id="PS00358">
    <property type="entry name" value="RIBOSOMAL_L5"/>
    <property type="match status" value="1"/>
</dbReference>
<evidence type="ECO:0000255" key="1">
    <source>
        <dbReference type="HAMAP-Rule" id="MF_01333"/>
    </source>
</evidence>
<evidence type="ECO:0000305" key="2"/>
<accession>Q98N45</accession>